<organism>
    <name type="scientific">Nasturtium officinale</name>
    <name type="common">Watercress</name>
    <name type="synonym">Rorippa nasturtium-aquaticum</name>
    <dbReference type="NCBI Taxonomy" id="65948"/>
    <lineage>
        <taxon>Eukaryota</taxon>
        <taxon>Viridiplantae</taxon>
        <taxon>Streptophyta</taxon>
        <taxon>Embryophyta</taxon>
        <taxon>Tracheophyta</taxon>
        <taxon>Spermatophyta</taxon>
        <taxon>Magnoliopsida</taxon>
        <taxon>eudicotyledons</taxon>
        <taxon>Gunneridae</taxon>
        <taxon>Pentapetalae</taxon>
        <taxon>rosids</taxon>
        <taxon>malvids</taxon>
        <taxon>Brassicales</taxon>
        <taxon>Brassicaceae</taxon>
        <taxon>Cardamineae</taxon>
        <taxon>Nasturtium</taxon>
    </lineage>
</organism>
<sequence>MTKRYWNIDLEEMMRAGVHFGHGTRKWNPRMAPYISAKRKGIHIINLTRTARFLSEACDLVFDAASRGKQFLIVGTKNKAADLVSRAAIRARCHYVNKKWLGGMLTNWSTTEKRLHKFRDLRTEQKTEGFNRLPKRDAAVLKRQLSRLETYLGGIKYMTGLPDIVIIIDQQEEYTALRECITLGIPTISLIDTNCNPDLADISIPANDDAIASIRFILNKLVFAICEGRSSYIQNS</sequence>
<protein>
    <recommendedName>
        <fullName evidence="1">Small ribosomal subunit protein uS2c</fullName>
    </recommendedName>
    <alternativeName>
        <fullName>30S ribosomal protein S2, chloroplastic</fullName>
    </alternativeName>
</protein>
<accession>A4QLS2</accession>
<geneLocation type="chloroplast"/>
<keyword id="KW-0150">Chloroplast</keyword>
<keyword id="KW-0934">Plastid</keyword>
<keyword id="KW-0687">Ribonucleoprotein</keyword>
<keyword id="KW-0689">Ribosomal protein</keyword>
<name>RR2_NASOF</name>
<gene>
    <name type="primary">rps2</name>
</gene>
<reference key="1">
    <citation type="submission" date="2007-03" db="EMBL/GenBank/DDBJ databases">
        <title>Sequencing analysis of Nasturtium officinale chloroplast DNA.</title>
        <authorList>
            <person name="Hosouchi T."/>
            <person name="Tsuruoka H."/>
            <person name="Kotani H."/>
        </authorList>
    </citation>
    <scope>NUCLEOTIDE SEQUENCE [LARGE SCALE GENOMIC DNA]</scope>
</reference>
<dbReference type="EMBL" id="AP009376">
    <property type="protein sequence ID" value="BAF50627.1"/>
    <property type="molecule type" value="Genomic_DNA"/>
</dbReference>
<dbReference type="RefSeq" id="YP_001123803.1">
    <property type="nucleotide sequence ID" value="NC_009275.1"/>
</dbReference>
<dbReference type="SMR" id="A4QLS2"/>
<dbReference type="GeneID" id="4962154"/>
<dbReference type="GO" id="GO:0009507">
    <property type="term" value="C:chloroplast"/>
    <property type="evidence" value="ECO:0007669"/>
    <property type="project" value="UniProtKB-SubCell"/>
</dbReference>
<dbReference type="GO" id="GO:0005763">
    <property type="term" value="C:mitochondrial small ribosomal subunit"/>
    <property type="evidence" value="ECO:0007669"/>
    <property type="project" value="TreeGrafter"/>
</dbReference>
<dbReference type="GO" id="GO:0003735">
    <property type="term" value="F:structural constituent of ribosome"/>
    <property type="evidence" value="ECO:0007669"/>
    <property type="project" value="InterPro"/>
</dbReference>
<dbReference type="GO" id="GO:0006412">
    <property type="term" value="P:translation"/>
    <property type="evidence" value="ECO:0007669"/>
    <property type="project" value="UniProtKB-UniRule"/>
</dbReference>
<dbReference type="CDD" id="cd01425">
    <property type="entry name" value="RPS2"/>
    <property type="match status" value="1"/>
</dbReference>
<dbReference type="FunFam" id="3.40.50.10490:FF:000101">
    <property type="match status" value="1"/>
</dbReference>
<dbReference type="FunFam" id="1.10.287.610:FF:000001">
    <property type="entry name" value="30S ribosomal protein S2"/>
    <property type="match status" value="1"/>
</dbReference>
<dbReference type="Gene3D" id="3.40.50.10490">
    <property type="entry name" value="Glucose-6-phosphate isomerase like protein, domain 1"/>
    <property type="match status" value="1"/>
</dbReference>
<dbReference type="Gene3D" id="1.10.287.610">
    <property type="entry name" value="Helix hairpin bin"/>
    <property type="match status" value="1"/>
</dbReference>
<dbReference type="HAMAP" id="MF_00291_B">
    <property type="entry name" value="Ribosomal_uS2_B"/>
    <property type="match status" value="1"/>
</dbReference>
<dbReference type="InterPro" id="IPR001865">
    <property type="entry name" value="Ribosomal_uS2"/>
</dbReference>
<dbReference type="InterPro" id="IPR005706">
    <property type="entry name" value="Ribosomal_uS2_bac/mit/plastid"/>
</dbReference>
<dbReference type="InterPro" id="IPR018130">
    <property type="entry name" value="Ribosomal_uS2_CS"/>
</dbReference>
<dbReference type="InterPro" id="IPR023591">
    <property type="entry name" value="Ribosomal_uS2_flav_dom_sf"/>
</dbReference>
<dbReference type="NCBIfam" id="TIGR01011">
    <property type="entry name" value="rpsB_bact"/>
    <property type="match status" value="1"/>
</dbReference>
<dbReference type="PANTHER" id="PTHR12534">
    <property type="entry name" value="30S RIBOSOMAL PROTEIN S2 PROKARYOTIC AND ORGANELLAR"/>
    <property type="match status" value="1"/>
</dbReference>
<dbReference type="PANTHER" id="PTHR12534:SF0">
    <property type="entry name" value="SMALL RIBOSOMAL SUBUNIT PROTEIN US2M"/>
    <property type="match status" value="1"/>
</dbReference>
<dbReference type="Pfam" id="PF00318">
    <property type="entry name" value="Ribosomal_S2"/>
    <property type="match status" value="1"/>
</dbReference>
<dbReference type="PRINTS" id="PR00395">
    <property type="entry name" value="RIBOSOMALS2"/>
</dbReference>
<dbReference type="SUPFAM" id="SSF52313">
    <property type="entry name" value="Ribosomal protein S2"/>
    <property type="match status" value="1"/>
</dbReference>
<dbReference type="PROSITE" id="PS00962">
    <property type="entry name" value="RIBOSOMAL_S2_1"/>
    <property type="match status" value="1"/>
</dbReference>
<dbReference type="PROSITE" id="PS00963">
    <property type="entry name" value="RIBOSOMAL_S2_2"/>
    <property type="match status" value="1"/>
</dbReference>
<feature type="chain" id="PRO_0000352133" description="Small ribosomal subunit protein uS2c">
    <location>
        <begin position="1"/>
        <end position="236"/>
    </location>
</feature>
<evidence type="ECO:0000305" key="1"/>
<proteinExistence type="inferred from homology"/>
<comment type="subcellular location">
    <subcellularLocation>
        <location>Plastid</location>
        <location>Chloroplast</location>
    </subcellularLocation>
</comment>
<comment type="similarity">
    <text evidence="1">Belongs to the universal ribosomal protein uS2 family.</text>
</comment>